<dbReference type="EMBL" id="CP000143">
    <property type="protein sequence ID" value="ABA77876.1"/>
    <property type="molecule type" value="Genomic_DNA"/>
</dbReference>
<dbReference type="RefSeq" id="WP_002722516.1">
    <property type="nucleotide sequence ID" value="NZ_CP030271.1"/>
</dbReference>
<dbReference type="RefSeq" id="YP_351777.1">
    <property type="nucleotide sequence ID" value="NC_007493.2"/>
</dbReference>
<dbReference type="SMR" id="Q3J5Q8"/>
<dbReference type="STRING" id="272943.RSP_1729"/>
<dbReference type="EnsemblBacteria" id="ABA77876">
    <property type="protein sequence ID" value="ABA77876"/>
    <property type="gene ID" value="RSP_1729"/>
</dbReference>
<dbReference type="GeneID" id="67445514"/>
<dbReference type="KEGG" id="rsp:RSP_1729"/>
<dbReference type="PATRIC" id="fig|272943.9.peg.607"/>
<dbReference type="eggNOG" id="COG0096">
    <property type="taxonomic scope" value="Bacteria"/>
</dbReference>
<dbReference type="OrthoDB" id="9802617at2"/>
<dbReference type="PhylomeDB" id="Q3J5Q8"/>
<dbReference type="Proteomes" id="UP000002703">
    <property type="component" value="Chromosome 1"/>
</dbReference>
<dbReference type="GO" id="GO:1990904">
    <property type="term" value="C:ribonucleoprotein complex"/>
    <property type="evidence" value="ECO:0007669"/>
    <property type="project" value="UniProtKB-KW"/>
</dbReference>
<dbReference type="GO" id="GO:0005840">
    <property type="term" value="C:ribosome"/>
    <property type="evidence" value="ECO:0007669"/>
    <property type="project" value="UniProtKB-KW"/>
</dbReference>
<dbReference type="GO" id="GO:0019843">
    <property type="term" value="F:rRNA binding"/>
    <property type="evidence" value="ECO:0007669"/>
    <property type="project" value="UniProtKB-UniRule"/>
</dbReference>
<dbReference type="GO" id="GO:0003735">
    <property type="term" value="F:structural constituent of ribosome"/>
    <property type="evidence" value="ECO:0007669"/>
    <property type="project" value="InterPro"/>
</dbReference>
<dbReference type="GO" id="GO:0006412">
    <property type="term" value="P:translation"/>
    <property type="evidence" value="ECO:0007669"/>
    <property type="project" value="UniProtKB-UniRule"/>
</dbReference>
<dbReference type="FunFam" id="3.30.1370.30:FF:000002">
    <property type="entry name" value="30S ribosomal protein S8"/>
    <property type="match status" value="1"/>
</dbReference>
<dbReference type="FunFam" id="3.30.1490.10:FF:000001">
    <property type="entry name" value="30S ribosomal protein S8"/>
    <property type="match status" value="1"/>
</dbReference>
<dbReference type="Gene3D" id="3.30.1370.30">
    <property type="match status" value="1"/>
</dbReference>
<dbReference type="Gene3D" id="3.30.1490.10">
    <property type="match status" value="1"/>
</dbReference>
<dbReference type="HAMAP" id="MF_01302_B">
    <property type="entry name" value="Ribosomal_uS8_B"/>
    <property type="match status" value="1"/>
</dbReference>
<dbReference type="InterPro" id="IPR000630">
    <property type="entry name" value="Ribosomal_uS8"/>
</dbReference>
<dbReference type="InterPro" id="IPR047863">
    <property type="entry name" value="Ribosomal_uS8_CS"/>
</dbReference>
<dbReference type="InterPro" id="IPR035987">
    <property type="entry name" value="Ribosomal_uS8_sf"/>
</dbReference>
<dbReference type="NCBIfam" id="NF001109">
    <property type="entry name" value="PRK00136.1"/>
    <property type="match status" value="1"/>
</dbReference>
<dbReference type="PANTHER" id="PTHR11758">
    <property type="entry name" value="40S RIBOSOMAL PROTEIN S15A"/>
    <property type="match status" value="1"/>
</dbReference>
<dbReference type="Pfam" id="PF00410">
    <property type="entry name" value="Ribosomal_S8"/>
    <property type="match status" value="1"/>
</dbReference>
<dbReference type="SUPFAM" id="SSF56047">
    <property type="entry name" value="Ribosomal protein S8"/>
    <property type="match status" value="1"/>
</dbReference>
<dbReference type="PROSITE" id="PS00053">
    <property type="entry name" value="RIBOSOMAL_S8"/>
    <property type="match status" value="1"/>
</dbReference>
<feature type="chain" id="PRO_0000225888" description="Small ribosomal subunit protein uS8">
    <location>
        <begin position="1"/>
        <end position="132"/>
    </location>
</feature>
<reference key="1">
    <citation type="submission" date="2005-09" db="EMBL/GenBank/DDBJ databases">
        <title>Complete sequence of chromosome 1 of Rhodobacter sphaeroides 2.4.1.</title>
        <authorList>
            <person name="Copeland A."/>
            <person name="Lucas S."/>
            <person name="Lapidus A."/>
            <person name="Barry K."/>
            <person name="Detter J.C."/>
            <person name="Glavina T."/>
            <person name="Hammon N."/>
            <person name="Israni S."/>
            <person name="Pitluck S."/>
            <person name="Richardson P."/>
            <person name="Mackenzie C."/>
            <person name="Choudhary M."/>
            <person name="Larimer F."/>
            <person name="Hauser L.J."/>
            <person name="Land M."/>
            <person name="Donohue T.J."/>
            <person name="Kaplan S."/>
        </authorList>
    </citation>
    <scope>NUCLEOTIDE SEQUENCE [LARGE SCALE GENOMIC DNA]</scope>
    <source>
        <strain>ATCC 17023 / DSM 158 / JCM 6121 / CCUG 31486 / LMG 2827 / NBRC 12203 / NCIMB 8253 / ATH 2.4.1.</strain>
    </source>
</reference>
<organism>
    <name type="scientific">Cereibacter sphaeroides (strain ATCC 17023 / DSM 158 / JCM 6121 / CCUG 31486 / LMG 2827 / NBRC 12203 / NCIMB 8253 / ATH 2.4.1.)</name>
    <name type="common">Rhodobacter sphaeroides</name>
    <dbReference type="NCBI Taxonomy" id="272943"/>
    <lineage>
        <taxon>Bacteria</taxon>
        <taxon>Pseudomonadati</taxon>
        <taxon>Pseudomonadota</taxon>
        <taxon>Alphaproteobacteria</taxon>
        <taxon>Rhodobacterales</taxon>
        <taxon>Paracoccaceae</taxon>
        <taxon>Cereibacter</taxon>
    </lineage>
</organism>
<accession>Q3J5Q8</accession>
<keyword id="KW-1185">Reference proteome</keyword>
<keyword id="KW-0687">Ribonucleoprotein</keyword>
<keyword id="KW-0689">Ribosomal protein</keyword>
<keyword id="KW-0694">RNA-binding</keyword>
<keyword id="KW-0699">rRNA-binding</keyword>
<name>RS8_CERS4</name>
<proteinExistence type="inferred from homology"/>
<protein>
    <recommendedName>
        <fullName evidence="1">Small ribosomal subunit protein uS8</fullName>
    </recommendedName>
    <alternativeName>
        <fullName evidence="2">30S ribosomal protein S8</fullName>
    </alternativeName>
</protein>
<gene>
    <name evidence="1" type="primary">rpsH</name>
    <name type="ordered locus">RHOS4_03080</name>
    <name type="ORF">RSP_1729</name>
</gene>
<comment type="function">
    <text evidence="1">One of the primary rRNA binding proteins, it binds directly to 16S rRNA central domain where it helps coordinate assembly of the platform of the 30S subunit.</text>
</comment>
<comment type="subunit">
    <text evidence="1">Part of the 30S ribosomal subunit. Contacts proteins S5 and S12.</text>
</comment>
<comment type="similarity">
    <text evidence="1">Belongs to the universal ribosomal protein uS8 family.</text>
</comment>
<sequence length="132" mass="14414">MSVNDPLGDMLTRIRNAQLRGKSTVSTPASRLRAWVLDVLQAEGYIRGYEKKETENGQGELVISLKYFEGTPVIRELKRVSKPGRRVYMATKDLPSVRNGLGVSIISTPKGVMSDASARSANVGGEVLCTVF</sequence>
<evidence type="ECO:0000255" key="1">
    <source>
        <dbReference type="HAMAP-Rule" id="MF_01302"/>
    </source>
</evidence>
<evidence type="ECO:0000305" key="2"/>